<evidence type="ECO:0000255" key="1"/>
<evidence type="ECO:0000269" key="2">
    <source>
    </source>
</evidence>
<evidence type="ECO:0000269" key="3">
    <source>
    </source>
</evidence>
<evidence type="ECO:0000269" key="4">
    <source>
    </source>
</evidence>
<evidence type="ECO:0000269" key="5">
    <source>
    </source>
</evidence>
<evidence type="ECO:0000269" key="6">
    <source>
    </source>
</evidence>
<evidence type="ECO:0000269" key="7">
    <source>
    </source>
</evidence>
<evidence type="ECO:0000269" key="8">
    <source>
    </source>
</evidence>
<evidence type="ECO:0000269" key="9">
    <source>
    </source>
</evidence>
<evidence type="ECO:0000269" key="10">
    <source>
    </source>
</evidence>
<evidence type="ECO:0000269" key="11">
    <source>
    </source>
</evidence>
<evidence type="ECO:0000269" key="12">
    <source>
    </source>
</evidence>
<evidence type="ECO:0000269" key="13">
    <source>
    </source>
</evidence>
<evidence type="ECO:0000269" key="14">
    <source>
    </source>
</evidence>
<evidence type="ECO:0000269" key="15">
    <source>
    </source>
</evidence>
<evidence type="ECO:0000269" key="16">
    <source>
    </source>
</evidence>
<evidence type="ECO:0000269" key="17">
    <source>
    </source>
</evidence>
<evidence type="ECO:0000269" key="18">
    <source>
    </source>
</evidence>
<evidence type="ECO:0000269" key="19">
    <source>
    </source>
</evidence>
<evidence type="ECO:0000269" key="20">
    <source>
    </source>
</evidence>
<evidence type="ECO:0000269" key="21">
    <source>
    </source>
</evidence>
<evidence type="ECO:0000269" key="22">
    <source>
    </source>
</evidence>
<evidence type="ECO:0000269" key="23">
    <source>
    </source>
</evidence>
<evidence type="ECO:0000269" key="24">
    <source>
    </source>
</evidence>
<evidence type="ECO:0000269" key="25">
    <source>
    </source>
</evidence>
<evidence type="ECO:0000269" key="26">
    <source ref="4"/>
</evidence>
<evidence type="ECO:0000303" key="27">
    <source>
    </source>
</evidence>
<evidence type="ECO:0000303" key="28">
    <source>
    </source>
</evidence>
<evidence type="ECO:0007744" key="29">
    <source>
    </source>
</evidence>
<evidence type="ECO:0007744" key="30">
    <source>
    </source>
</evidence>
<evidence type="ECO:0007744" key="31">
    <source>
    </source>
</evidence>
<accession>O15360</accession>
<accession>A5D923</accession>
<accession>B4DRI7</accession>
<accession>H3BSR5</accession>
<accession>O75266</accession>
<accession>Q6PL10</accession>
<accession>Q92497</accession>
<accession>Q96H18</accession>
<accession>Q9UEA5</accession>
<accession>Q9UEL8</accession>
<accession>Q9UEL9</accession>
<accession>Q9UPK3</accession>
<accession>Q9Y6M2</accession>
<dbReference type="EMBL" id="X99226">
    <property type="protein sequence ID" value="CAA67610.1"/>
    <property type="molecule type" value="mRNA"/>
</dbReference>
<dbReference type="EMBL" id="Z83067">
    <property type="protein sequence ID" value="CAB05445.1"/>
    <property type="molecule type" value="Genomic_DNA"/>
</dbReference>
<dbReference type="EMBL" id="Z83068">
    <property type="protein sequence ID" value="CAB05445.1"/>
    <property type="status" value="JOINED"/>
    <property type="molecule type" value="Genomic_DNA"/>
</dbReference>
<dbReference type="EMBL" id="Z83069">
    <property type="protein sequence ID" value="CAB05445.1"/>
    <property type="status" value="JOINED"/>
    <property type="molecule type" value="Genomic_DNA"/>
</dbReference>
<dbReference type="EMBL" id="Z83070">
    <property type="protein sequence ID" value="CAB05445.1"/>
    <property type="status" value="JOINED"/>
    <property type="molecule type" value="Genomic_DNA"/>
</dbReference>
<dbReference type="EMBL" id="Z83071">
    <property type="protein sequence ID" value="CAB05445.1"/>
    <property type="status" value="JOINED"/>
    <property type="molecule type" value="Genomic_DNA"/>
</dbReference>
<dbReference type="EMBL" id="Z83072">
    <property type="protein sequence ID" value="CAB05445.1"/>
    <property type="status" value="JOINED"/>
    <property type="molecule type" value="Genomic_DNA"/>
</dbReference>
<dbReference type="EMBL" id="Z83073">
    <property type="protein sequence ID" value="CAB05445.1"/>
    <property type="status" value="JOINED"/>
    <property type="molecule type" value="Genomic_DNA"/>
</dbReference>
<dbReference type="EMBL" id="Z83074">
    <property type="protein sequence ID" value="CAB05445.1"/>
    <property type="status" value="JOINED"/>
    <property type="molecule type" value="Genomic_DNA"/>
</dbReference>
<dbReference type="EMBL" id="Z83075">
    <property type="protein sequence ID" value="CAB05445.1"/>
    <property type="status" value="JOINED"/>
    <property type="molecule type" value="Genomic_DNA"/>
</dbReference>
<dbReference type="EMBL" id="Z83076">
    <property type="protein sequence ID" value="CAB05445.1"/>
    <property type="status" value="JOINED"/>
    <property type="molecule type" value="Genomic_DNA"/>
</dbReference>
<dbReference type="EMBL" id="Z83077">
    <property type="protein sequence ID" value="CAB05445.1"/>
    <property type="status" value="JOINED"/>
    <property type="molecule type" value="Genomic_DNA"/>
</dbReference>
<dbReference type="EMBL" id="Z83078">
    <property type="protein sequence ID" value="CAB05445.1"/>
    <property type="status" value="JOINED"/>
    <property type="molecule type" value="Genomic_DNA"/>
</dbReference>
<dbReference type="EMBL" id="Z83079">
    <property type="protein sequence ID" value="CAB05445.1"/>
    <property type="status" value="JOINED"/>
    <property type="molecule type" value="Genomic_DNA"/>
</dbReference>
<dbReference type="EMBL" id="Z83080">
    <property type="protein sequence ID" value="CAB05445.1"/>
    <property type="status" value="JOINED"/>
    <property type="molecule type" value="Genomic_DNA"/>
</dbReference>
<dbReference type="EMBL" id="Z83081">
    <property type="protein sequence ID" value="CAB05445.1"/>
    <property type="status" value="JOINED"/>
    <property type="molecule type" value="Genomic_DNA"/>
</dbReference>
<dbReference type="EMBL" id="Z83082">
    <property type="protein sequence ID" value="CAB05445.1"/>
    <property type="status" value="JOINED"/>
    <property type="molecule type" value="Genomic_DNA"/>
</dbReference>
<dbReference type="EMBL" id="Z83083">
    <property type="protein sequence ID" value="CAB05445.1"/>
    <property type="status" value="JOINED"/>
    <property type="molecule type" value="Genomic_DNA"/>
</dbReference>
<dbReference type="EMBL" id="Z83084">
    <property type="protein sequence ID" value="CAB05445.1"/>
    <property type="status" value="JOINED"/>
    <property type="molecule type" value="Genomic_DNA"/>
</dbReference>
<dbReference type="EMBL" id="Z83085">
    <property type="protein sequence ID" value="CAB05445.1"/>
    <property type="status" value="JOINED"/>
    <property type="molecule type" value="Genomic_DNA"/>
</dbReference>
<dbReference type="EMBL" id="Z83086">
    <property type="protein sequence ID" value="CAB05445.1"/>
    <property type="status" value="JOINED"/>
    <property type="molecule type" value="Genomic_DNA"/>
</dbReference>
<dbReference type="EMBL" id="Z83087">
    <property type="protein sequence ID" value="CAB05445.1"/>
    <property type="status" value="JOINED"/>
    <property type="molecule type" value="Genomic_DNA"/>
</dbReference>
<dbReference type="EMBL" id="Z83088">
    <property type="protein sequence ID" value="CAB05445.1"/>
    <property type="status" value="JOINED"/>
    <property type="molecule type" value="Genomic_DNA"/>
</dbReference>
<dbReference type="EMBL" id="Z83089">
    <property type="protein sequence ID" value="CAB05445.1"/>
    <property type="status" value="JOINED"/>
    <property type="molecule type" value="Genomic_DNA"/>
</dbReference>
<dbReference type="EMBL" id="Z83090">
    <property type="protein sequence ID" value="CAB05445.1"/>
    <property type="status" value="JOINED"/>
    <property type="molecule type" value="Genomic_DNA"/>
</dbReference>
<dbReference type="EMBL" id="Z83091">
    <property type="protein sequence ID" value="CAB05445.1"/>
    <property type="status" value="JOINED"/>
    <property type="molecule type" value="Genomic_DNA"/>
</dbReference>
<dbReference type="EMBL" id="Z83092">
    <property type="protein sequence ID" value="CAB05445.1"/>
    <property type="status" value="JOINED"/>
    <property type="molecule type" value="Genomic_DNA"/>
</dbReference>
<dbReference type="EMBL" id="Z83093">
    <property type="protein sequence ID" value="CAB05445.1"/>
    <property type="status" value="JOINED"/>
    <property type="molecule type" value="Genomic_DNA"/>
</dbReference>
<dbReference type="EMBL" id="Z83094">
    <property type="protein sequence ID" value="CAB05445.1"/>
    <property type="status" value="JOINED"/>
    <property type="molecule type" value="Genomic_DNA"/>
</dbReference>
<dbReference type="EMBL" id="Z83095">
    <property type="protein sequence ID" value="CAB05445.1"/>
    <property type="status" value="JOINED"/>
    <property type="molecule type" value="Genomic_DNA"/>
</dbReference>
<dbReference type="EMBL" id="Z83151">
    <property type="protein sequence ID" value="CAB05445.1"/>
    <property type="status" value="JOINED"/>
    <property type="molecule type" value="Genomic_DNA"/>
</dbReference>
<dbReference type="EMBL" id="AK299282">
    <property type="protein sequence ID" value="BAG61299.1"/>
    <property type="molecule type" value="mRNA"/>
</dbReference>
<dbReference type="EMBL" id="AC005360">
    <property type="protein sequence ID" value="AAC28751.1"/>
    <property type="molecule type" value="Genomic_DNA"/>
</dbReference>
<dbReference type="EMBL" id="AC005565">
    <property type="protein sequence ID" value="AAC33304.1"/>
    <property type="molecule type" value="Genomic_DNA"/>
</dbReference>
<dbReference type="EMBL" id="AC005567">
    <property type="protein sequence ID" value="AAC33401.1"/>
    <property type="molecule type" value="Genomic_DNA"/>
</dbReference>
<dbReference type="EMBL" id="AY598423">
    <property type="protein sequence ID" value="AAS99350.1"/>
    <property type="molecule type" value="Genomic_DNA"/>
</dbReference>
<dbReference type="EMBL" id="AC092385">
    <property type="status" value="NOT_ANNOTATED_CDS"/>
    <property type="molecule type" value="Genomic_DNA"/>
</dbReference>
<dbReference type="EMBL" id="BC008979">
    <property type="protein sequence ID" value="AAH08979.1"/>
    <property type="molecule type" value="mRNA"/>
</dbReference>
<dbReference type="EMBL" id="BC141972">
    <property type="protein sequence ID" value="AAI41973.1"/>
    <property type="molecule type" value="mRNA"/>
</dbReference>
<dbReference type="EMBL" id="AJ225084">
    <property type="protein sequence ID" value="CAA12393.1"/>
    <property type="molecule type" value="Genomic_DNA"/>
</dbReference>
<dbReference type="EMBL" id="AJ225085">
    <property type="protein sequence ID" value="CAA12394.1"/>
    <property type="molecule type" value="Genomic_DNA"/>
</dbReference>
<dbReference type="EMBL" id="AF054569">
    <property type="protein sequence ID" value="AAC28331.1"/>
    <property type="molecule type" value="Genomic_DNA"/>
</dbReference>
<dbReference type="CCDS" id="CCDS32515.1">
    <molecule id="O15360-1"/>
</dbReference>
<dbReference type="CCDS" id="CCDS42221.1">
    <molecule id="O15360-2"/>
</dbReference>
<dbReference type="CCDS" id="CCDS67099.1">
    <molecule id="O15360-3"/>
</dbReference>
<dbReference type="PIR" id="T02755">
    <property type="entry name" value="T02755"/>
</dbReference>
<dbReference type="RefSeq" id="NP_000126.2">
    <molecule id="O15360-1"/>
    <property type="nucleotide sequence ID" value="NM_000135.4"/>
</dbReference>
<dbReference type="RefSeq" id="NP_001018122.1">
    <molecule id="O15360-2"/>
    <property type="nucleotide sequence ID" value="NM_001018112.3"/>
</dbReference>
<dbReference type="RefSeq" id="NP_001273096.1">
    <molecule id="O15360-3"/>
    <property type="nucleotide sequence ID" value="NM_001286167.3"/>
</dbReference>
<dbReference type="PDB" id="7KZP">
    <property type="method" value="EM"/>
    <property type="resolution" value="3.10 A"/>
    <property type="chains" value="A/S=1-1455"/>
</dbReference>
<dbReference type="PDB" id="7KZQ">
    <property type="method" value="EM"/>
    <property type="resolution" value="4.20 A"/>
    <property type="chains" value="A/S=1-1455"/>
</dbReference>
<dbReference type="PDB" id="7KZR">
    <property type="method" value="EM"/>
    <property type="resolution" value="4.20 A"/>
    <property type="chains" value="A/S=1-1455"/>
</dbReference>
<dbReference type="PDB" id="7KZS">
    <property type="method" value="EM"/>
    <property type="resolution" value="4.20 A"/>
    <property type="chains" value="A/S=1-1455"/>
</dbReference>
<dbReference type="PDB" id="7KZT">
    <property type="method" value="EM"/>
    <property type="resolution" value="4.20 A"/>
    <property type="chains" value="A/S=1-1455"/>
</dbReference>
<dbReference type="PDB" id="7KZV">
    <property type="method" value="EM"/>
    <property type="resolution" value="4.20 A"/>
    <property type="chains" value="A/S=1-1455"/>
</dbReference>
<dbReference type="PDBsum" id="7KZP"/>
<dbReference type="PDBsum" id="7KZQ"/>
<dbReference type="PDBsum" id="7KZR"/>
<dbReference type="PDBsum" id="7KZS"/>
<dbReference type="PDBsum" id="7KZT"/>
<dbReference type="PDBsum" id="7KZV"/>
<dbReference type="EMDB" id="EMD-23085"/>
<dbReference type="EMDB" id="EMD-23086"/>
<dbReference type="EMDB" id="EMD-23087"/>
<dbReference type="EMDB" id="EMD-23088"/>
<dbReference type="EMDB" id="EMD-23089"/>
<dbReference type="EMDB" id="EMD-23090"/>
<dbReference type="SMR" id="O15360"/>
<dbReference type="BioGRID" id="108472">
    <property type="interactions" value="195"/>
</dbReference>
<dbReference type="ComplexPortal" id="CPX-6263">
    <property type="entry name" value="Fanconi anemia ubiquitin ligase complex"/>
</dbReference>
<dbReference type="CORUM" id="O15360"/>
<dbReference type="DIP" id="DIP-32650N"/>
<dbReference type="FunCoup" id="O15360">
    <property type="interactions" value="2305"/>
</dbReference>
<dbReference type="IntAct" id="O15360">
    <property type="interactions" value="65"/>
</dbReference>
<dbReference type="MINT" id="O15360"/>
<dbReference type="STRING" id="9606.ENSP00000373952"/>
<dbReference type="MoonDB" id="O15360">
    <property type="type" value="Predicted"/>
</dbReference>
<dbReference type="GlyGen" id="O15360">
    <property type="glycosylation" value="1 site, 1 O-linked glycan (1 site)"/>
</dbReference>
<dbReference type="iPTMnet" id="O15360"/>
<dbReference type="PhosphoSitePlus" id="O15360"/>
<dbReference type="SwissPalm" id="O15360"/>
<dbReference type="BioMuta" id="FANCA"/>
<dbReference type="CPTAC" id="CPTAC-3226"/>
<dbReference type="jPOST" id="O15360"/>
<dbReference type="MassIVE" id="O15360"/>
<dbReference type="PaxDb" id="9606-ENSP00000373952"/>
<dbReference type="PeptideAtlas" id="O15360"/>
<dbReference type="ProteomicsDB" id="42431"/>
<dbReference type="ProteomicsDB" id="48611">
    <molecule id="O15360-1"/>
</dbReference>
<dbReference type="ProteomicsDB" id="48612">
    <molecule id="O15360-2"/>
</dbReference>
<dbReference type="Pumba" id="O15360"/>
<dbReference type="Antibodypedia" id="30916">
    <property type="antibodies" value="425 antibodies from 40 providers"/>
</dbReference>
<dbReference type="DNASU" id="2175"/>
<dbReference type="Ensembl" id="ENST00000389301.8">
    <molecule id="O15360-1"/>
    <property type="protein sequence ID" value="ENSP00000373952.3"/>
    <property type="gene ID" value="ENSG00000187741.16"/>
</dbReference>
<dbReference type="Ensembl" id="ENST00000389302.7">
    <molecule id="O15360-2"/>
    <property type="protein sequence ID" value="ENSP00000373953.3"/>
    <property type="gene ID" value="ENSG00000187741.16"/>
</dbReference>
<dbReference type="Ensembl" id="ENST00000568369.6">
    <molecule id="O15360-3"/>
    <property type="protein sequence ID" value="ENSP00000456829.1"/>
    <property type="gene ID" value="ENSG00000187741.16"/>
</dbReference>
<dbReference type="Ensembl" id="ENST00000696275.1">
    <molecule id="O15360-2"/>
    <property type="protein sequence ID" value="ENSP00000512517.1"/>
    <property type="gene ID" value="ENSG00000187741.16"/>
</dbReference>
<dbReference type="GeneID" id="2175"/>
<dbReference type="KEGG" id="hsa:2175"/>
<dbReference type="MANE-Select" id="ENST00000389301.8">
    <property type="protein sequence ID" value="ENSP00000373952.3"/>
    <property type="RefSeq nucleotide sequence ID" value="NM_000135.4"/>
    <property type="RefSeq protein sequence ID" value="NP_000126.2"/>
</dbReference>
<dbReference type="UCSC" id="uc002fou.2">
    <molecule id="O15360-1"/>
    <property type="organism name" value="human"/>
</dbReference>
<dbReference type="AGR" id="HGNC:3582"/>
<dbReference type="CTD" id="2175"/>
<dbReference type="DisGeNET" id="2175"/>
<dbReference type="GeneCards" id="FANCA"/>
<dbReference type="GeneReviews" id="FANCA"/>
<dbReference type="HGNC" id="HGNC:3582">
    <property type="gene designation" value="FANCA"/>
</dbReference>
<dbReference type="HPA" id="ENSG00000187741">
    <property type="expression patterns" value="Tissue enhanced (testis)"/>
</dbReference>
<dbReference type="MalaCards" id="FANCA"/>
<dbReference type="MIM" id="227650">
    <property type="type" value="phenotype"/>
</dbReference>
<dbReference type="MIM" id="607139">
    <property type="type" value="gene"/>
</dbReference>
<dbReference type="neXtProt" id="NX_O15360"/>
<dbReference type="OpenTargets" id="ENSG00000187741"/>
<dbReference type="Orphanet" id="84">
    <property type="disease" value="Fanconi anemia"/>
</dbReference>
<dbReference type="PharmGKB" id="PA27995"/>
<dbReference type="VEuPathDB" id="HostDB:ENSG00000187741"/>
<dbReference type="eggNOG" id="ENOG502QT8N">
    <property type="taxonomic scope" value="Eukaryota"/>
</dbReference>
<dbReference type="GeneTree" id="ENSGT00390000007852"/>
<dbReference type="HOGENOM" id="CLU_005268_0_0_1"/>
<dbReference type="InParanoid" id="O15360"/>
<dbReference type="OMA" id="AIPHCPA"/>
<dbReference type="OrthoDB" id="2287188at2759"/>
<dbReference type="PAN-GO" id="O15360">
    <property type="GO annotations" value="2 GO annotations based on evolutionary models"/>
</dbReference>
<dbReference type="PhylomeDB" id="O15360"/>
<dbReference type="TreeFam" id="TF333412"/>
<dbReference type="PathwayCommons" id="O15360"/>
<dbReference type="Reactome" id="R-HSA-6783310">
    <property type="pathway name" value="Fanconi Anemia Pathway"/>
</dbReference>
<dbReference type="Reactome" id="R-HSA-9833482">
    <property type="pathway name" value="PKR-mediated signaling"/>
</dbReference>
<dbReference type="SignaLink" id="O15360"/>
<dbReference type="SIGNOR" id="O15360"/>
<dbReference type="BioGRID-ORCS" id="2175">
    <property type="hits" value="110 hits in 1170 CRISPR screens"/>
</dbReference>
<dbReference type="CD-CODE" id="8C2F96ED">
    <property type="entry name" value="Centrosome"/>
</dbReference>
<dbReference type="ChiTaRS" id="FANCA">
    <property type="organism name" value="human"/>
</dbReference>
<dbReference type="GeneWiki" id="FANCA"/>
<dbReference type="GenomeRNAi" id="2175"/>
<dbReference type="Pharos" id="O15360">
    <property type="development level" value="Tbio"/>
</dbReference>
<dbReference type="PRO" id="PR:O15360"/>
<dbReference type="Proteomes" id="UP000005640">
    <property type="component" value="Chromosome 16"/>
</dbReference>
<dbReference type="RNAct" id="O15360">
    <property type="molecule type" value="protein"/>
</dbReference>
<dbReference type="Bgee" id="ENSG00000187741">
    <property type="expression patterns" value="Expressed in right testis and 116 other cell types or tissues"/>
</dbReference>
<dbReference type="ExpressionAtlas" id="O15360">
    <property type="expression patterns" value="baseline and differential"/>
</dbReference>
<dbReference type="GO" id="GO:0000785">
    <property type="term" value="C:chromatin"/>
    <property type="evidence" value="ECO:0000314"/>
    <property type="project" value="ComplexPortal"/>
</dbReference>
<dbReference type="GO" id="GO:0005737">
    <property type="term" value="C:cytoplasm"/>
    <property type="evidence" value="ECO:0000304"/>
    <property type="project" value="ProtInc"/>
</dbReference>
<dbReference type="GO" id="GO:0005829">
    <property type="term" value="C:cytosol"/>
    <property type="evidence" value="ECO:0000304"/>
    <property type="project" value="Reactome"/>
</dbReference>
<dbReference type="GO" id="GO:0043240">
    <property type="term" value="C:Fanconi anaemia nuclear complex"/>
    <property type="evidence" value="ECO:0000314"/>
    <property type="project" value="UniProtKB"/>
</dbReference>
<dbReference type="GO" id="GO:0005654">
    <property type="term" value="C:nucleoplasm"/>
    <property type="evidence" value="ECO:0000314"/>
    <property type="project" value="HPA"/>
</dbReference>
<dbReference type="GO" id="GO:0005634">
    <property type="term" value="C:nucleus"/>
    <property type="evidence" value="ECO:0000314"/>
    <property type="project" value="BHF-UCL"/>
</dbReference>
<dbReference type="GO" id="GO:0006281">
    <property type="term" value="P:DNA repair"/>
    <property type="evidence" value="ECO:0000304"/>
    <property type="project" value="ProtInc"/>
</dbReference>
<dbReference type="GO" id="GO:0008585">
    <property type="term" value="P:female gonad development"/>
    <property type="evidence" value="ECO:0007669"/>
    <property type="project" value="Ensembl"/>
</dbReference>
<dbReference type="GO" id="GO:0036297">
    <property type="term" value="P:interstrand cross-link repair"/>
    <property type="evidence" value="ECO:0000303"/>
    <property type="project" value="ComplexPortal"/>
</dbReference>
<dbReference type="GO" id="GO:0008584">
    <property type="term" value="P:male gonad development"/>
    <property type="evidence" value="ECO:0007669"/>
    <property type="project" value="Ensembl"/>
</dbReference>
<dbReference type="GO" id="GO:0007140">
    <property type="term" value="P:male meiotic nuclear division"/>
    <property type="evidence" value="ECO:0007669"/>
    <property type="project" value="Ensembl"/>
</dbReference>
<dbReference type="GO" id="GO:0065003">
    <property type="term" value="P:protein-containing complex assembly"/>
    <property type="evidence" value="ECO:0000304"/>
    <property type="project" value="ProtInc"/>
</dbReference>
<dbReference type="GO" id="GO:2000348">
    <property type="term" value="P:regulation of CD40 signaling pathway"/>
    <property type="evidence" value="ECO:0007669"/>
    <property type="project" value="Ensembl"/>
</dbReference>
<dbReference type="GO" id="GO:1905936">
    <property type="term" value="P:regulation of germ cell proliferation"/>
    <property type="evidence" value="ECO:0007669"/>
    <property type="project" value="Ensembl"/>
</dbReference>
<dbReference type="GO" id="GO:0050727">
    <property type="term" value="P:regulation of inflammatory response"/>
    <property type="evidence" value="ECO:0007669"/>
    <property type="project" value="Ensembl"/>
</dbReference>
<dbReference type="GO" id="GO:0045589">
    <property type="term" value="P:regulation of regulatory T cell differentiation"/>
    <property type="evidence" value="ECO:0000318"/>
    <property type="project" value="GO_Central"/>
</dbReference>
<dbReference type="InterPro" id="IPR003516">
    <property type="entry name" value="FANCA"/>
</dbReference>
<dbReference type="InterPro" id="IPR055387">
    <property type="entry name" value="FANCA_arcN"/>
</dbReference>
<dbReference type="InterPro" id="IPR055386">
    <property type="entry name" value="FANCA_helical"/>
</dbReference>
<dbReference type="InterPro" id="IPR055277">
    <property type="entry name" value="Fanconi_A_C"/>
</dbReference>
<dbReference type="InterPro" id="IPR031729">
    <property type="entry name" value="Fanconi_A_N"/>
</dbReference>
<dbReference type="PANTHER" id="PTHR12047">
    <property type="entry name" value="FANCONI ANEMIA GROUP A PROTEIN"/>
    <property type="match status" value="1"/>
</dbReference>
<dbReference type="PANTHER" id="PTHR12047:SF2">
    <property type="entry name" value="FANCONI ANEMIA GROUP A PROTEIN"/>
    <property type="match status" value="1"/>
</dbReference>
<dbReference type="Pfam" id="PF24783">
    <property type="entry name" value="FANCA_arcN"/>
    <property type="match status" value="1"/>
</dbReference>
<dbReference type="Pfam" id="PF03511">
    <property type="entry name" value="FANCA_CTD"/>
    <property type="match status" value="1"/>
</dbReference>
<dbReference type="Pfam" id="PF24781">
    <property type="entry name" value="FANCA_helical"/>
    <property type="match status" value="1"/>
</dbReference>
<dbReference type="Pfam" id="PF15865">
    <property type="entry name" value="Fanconi_A_N"/>
    <property type="match status" value="1"/>
</dbReference>
<dbReference type="PRINTS" id="PR00826">
    <property type="entry name" value="FANCONIAGENE"/>
</dbReference>
<organism>
    <name type="scientific">Homo sapiens</name>
    <name type="common">Human</name>
    <dbReference type="NCBI Taxonomy" id="9606"/>
    <lineage>
        <taxon>Eukaryota</taxon>
        <taxon>Metazoa</taxon>
        <taxon>Chordata</taxon>
        <taxon>Craniata</taxon>
        <taxon>Vertebrata</taxon>
        <taxon>Euteleostomi</taxon>
        <taxon>Mammalia</taxon>
        <taxon>Eutheria</taxon>
        <taxon>Euarchontoglires</taxon>
        <taxon>Primates</taxon>
        <taxon>Haplorrhini</taxon>
        <taxon>Catarrhini</taxon>
        <taxon>Hominidae</taxon>
        <taxon>Homo</taxon>
    </lineage>
</organism>
<sequence length="1455" mass="162775">MSDSWVPNSASGQDPGGRRRAWAELLAGRVKREKYNPERAQKLKESAVRLLRSHQDLNALLLEVEGPLCKKLSLSKVIDCDSSEAYANHSSSFIGSALQDQASRLGVPVGILSAGMVASSVGQICTAPAETSHPVLLTVEQRKKLSSLLEFAQYLLAHSMFSRLSFCQELWKIQSSLLLEAVWHLHVQGIVSLQELLESHPDMHAVGSWLFRNLCCLCEQMEASCQHADVARAMLSDFVQMFVLRGFQKNSDLRRTVEPEKMPQVTVDVLQRMLIFALDALAAGVQEESSTHKIVRCWFGVFSGHTLGSVISTDPLKRFFSHTLTQILTHSPVLKASDAVQMQREWSFARTHPLLTSLYRRLFVMLSAEELVGHLQEVLETQEVHWQRVLSFVSALVVCFPEAQQLLEDWVARLMAQAFESCQLDSMVTAFLVVRQAALEGPSAFLSYADWFKASFGSTRGYHGCSKKALVFLFTFLSELVPFESPRYLQVHILHPPLVPGKYRSLLTDYISLAKTRLADLKVSIENMGLYEDLSSAGDITEPHSQALQDVEKAIMVFEHTGNIPVTVMEASIFRRPYYVSHFLPALLTPRVLPKVPDSRVAFIESLKRADKIPPSLYSTYCQACSAAEEKPEDAALGVRAEPNSAEEPLGQLTAALGELRASMTDPSQRDVISAQVAVISERLRAVLGHNEDDSSVEISKIQLSINTPRLEPREHMAVDLLLTSFCQNLMAASSVAPPERQGPWAALFVRTMCGRVLPAVLTRLCQLLRHQGPSLSAPHVLGLAALAVHLGESRSALPEVDVGPPAPGAGLPVPALFDSLLTCRTRDSLFFCLKFCTAAISYSLCKFSSQSRDTLCSCLSPGLIKKFQFLMFRLFSEARQPLSEEDVASLSWRPLHLPSADWQRAALSLWTHRTFREVLKEEDVHLTYQDWLHLELEIQPEADALSDTERQDFHQWAIHEHFLPESSASGGCDGDLQAACTILVNALMDFHQSSRSYDHSENSDLVFGGRTGNEDIISRLQEMVADLELQQDLIVPLGHTPSQEHFLFEIFRRRLQALTSGWSVAASLQRQRELLMYKRILLRLPSSVLCGSSFQAEQPITARCEQFFHLVNSEMRNFCSHGGALTQDITAHFFRGLLNACLRSRDPSLMVDFILAKCQTKCPLILTSALVWWPSLEPVLLCRWRRHCQSPLPRELQKLQEGRQFASDFLSPEAASPAPNPDWLSAAALHFAIQQVREENIRKQLKKLDCEREELLVFLFFFSLMGLLSSHLTSNSTTDLPKAFHVCAAILECLEKRKISWLALFQLTESDLRLGRLLLRVAPDQHTRLLPFAFYSLLSYFHEDAAIREEAFLHVAVDMYLKLVQLFVAGDTSTVSPPAGRSLELKGQGNPVELITKARLFLLQLIPRCPKKSFSHVAELLADRGDCDPEVSAALQSRQQAAPDADLSQEPHLF</sequence>
<protein>
    <recommendedName>
        <fullName>Fanconi anemia group A protein</fullName>
        <shortName>Protein FACA</shortName>
    </recommendedName>
</protein>
<name>FANCA_HUMAN</name>
<keyword id="KW-0002">3D-structure</keyword>
<keyword id="KW-0025">Alternative splicing</keyword>
<keyword id="KW-0963">Cytoplasm</keyword>
<keyword id="KW-0225">Disease variant</keyword>
<keyword id="KW-0227">DNA damage</keyword>
<keyword id="KW-0234">DNA repair</keyword>
<keyword id="KW-0923">Fanconi anemia</keyword>
<keyword id="KW-0539">Nucleus</keyword>
<keyword id="KW-0597">Phosphoprotein</keyword>
<keyword id="KW-1267">Proteomics identification</keyword>
<keyword id="KW-1185">Reference proteome</keyword>
<proteinExistence type="evidence at protein level"/>
<gene>
    <name type="primary">FANCA</name>
    <name type="synonym">FAA</name>
    <name type="synonym">FACA</name>
    <name type="synonym">FANCH</name>
</gene>
<comment type="function">
    <text>DNA repair protein that may operate in a postreplication repair or a cell cycle checkpoint function. May be involved in interstrand DNA cross-link repair and in the maintenance of normal chromosome stability.</text>
</comment>
<comment type="subunit">
    <text evidence="7 9 11 12 14 16 17 18">Belongs to the multisubunit FA complex composed of FANCA, FANCB, FANCC, FANCE, FANCF, FANCG, FANCL/PHF9 and FANCM. The complex is not found in FA patients. In complex with FANCF, FANCG and FANCL, but not with FANCC, nor FANCE, interacts with HES1; this interaction may be essential for the stability and nuclear localization of FA core complex proteins. The complex with FANCC and FANCG may also include EIF2AK2 and HSP70. Interacts with FAAP20/C1orf86; interaction is direct.</text>
</comment>
<comment type="interaction">
    <interactant intactId="EBI-81570">
        <id>O15360</id>
    </interactant>
    <interactant intactId="EBI-2557990">
        <id>Q0VG06</id>
        <label>FAAP100</label>
    </interactant>
    <organismsDiffer>false</organismsDiffer>
    <experiments>4</experiments>
</comment>
<comment type="interaction">
    <interactant intactId="EBI-81570">
        <id>O15360</id>
    </interactant>
    <interactant intactId="EBI-15965017">
        <id>Q6NZ36-1</id>
        <label>FAAP20</label>
    </interactant>
    <organismsDiffer>false</organismsDiffer>
    <experiments>5</experiments>
</comment>
<comment type="interaction">
    <interactant intactId="EBI-81570">
        <id>O15360</id>
    </interactant>
    <interactant intactId="EBI-81589">
        <id>Q9NPI8</id>
        <label>FANCF</label>
    </interactant>
    <organismsDiffer>false</organismsDiffer>
    <experiments>5</experiments>
</comment>
<comment type="interaction">
    <interactant intactId="EBI-81570">
        <id>O15360</id>
    </interactant>
    <interactant intactId="EBI-81610">
        <id>O15287</id>
        <label>FANCG</label>
    </interactant>
    <organismsDiffer>false</organismsDiffer>
    <experiments>23</experiments>
</comment>
<comment type="interaction">
    <interactant intactId="EBI-81570">
        <id>O15360</id>
    </interactant>
    <interactant intactId="EBI-401755">
        <id>P62993</id>
        <label>GRB2</label>
    </interactant>
    <organismsDiffer>false</organismsDiffer>
    <experiments>2</experiments>
</comment>
<comment type="interaction">
    <interactant intactId="EBI-21315382">
        <id>O15360-3</id>
    </interactant>
    <interactant intactId="EBI-81610">
        <id>O15287</id>
        <label>FANCG</label>
    </interactant>
    <organismsDiffer>false</organismsDiffer>
    <experiments>5</experiments>
</comment>
<comment type="subcellular location">
    <subcellularLocation>
        <location>Nucleus</location>
    </subcellularLocation>
    <subcellularLocation>
        <location>Cytoplasm</location>
    </subcellularLocation>
    <text>The major form is nuclear. The minor form is cytoplasmic.</text>
</comment>
<comment type="alternative products">
    <event type="alternative splicing"/>
    <isoform>
        <id>O15360-1</id>
        <name>1</name>
        <sequence type="displayed"/>
    </isoform>
    <isoform>
        <id>O15360-2</id>
        <name>2</name>
        <sequence type="described" ref="VSP_007039"/>
    </isoform>
    <isoform>
        <id>O15360-3</id>
        <name>3</name>
        <sequence type="described" ref="VSP_054682"/>
    </isoform>
</comment>
<comment type="PTM">
    <text evidence="24">Phosphorylation is required for the formation of the nuclear complex. Not phosphorylated in cells derived from groups A, B, C, E, F, G, and H.</text>
</comment>
<comment type="disease" evidence="2 3 4 5 6 13 21 22 25">
    <disease id="DI-01599">
        <name>Fanconi anemia, complementation group A</name>
        <acronym>FANCA</acronym>
        <description>A disorder affecting all bone marrow elements and resulting in anemia, leukopenia and thrombopenia. It is associated with cardiac, renal and limb malformations, dermal pigmentary changes, and a predisposition to the development of malignancies. At the cellular level it is associated with hypersensitivity to DNA-damaging agents, chromosomal instability (increased chromosome breakage) and defective DNA repair.</description>
        <dbReference type="MIM" id="227650"/>
    </disease>
    <text>The disease is caused by variants affecting the gene represented in this entry.</text>
</comment>
<comment type="online information" name="Atlas of Genetics and Cytogenetics in Oncology and Haematology">
    <link uri="https://atlasgeneticsoncology.org/gene/102/FA1"/>
</comment>
<comment type="online information" name="Fanconi Anemia Mutation Database">
    <link uri="https://www2.rockefeller.edu/fanconi/genes/jumpa"/>
</comment>
<reference key="1">
    <citation type="journal article" date="1996" name="Nat. Genet.">
        <title>Expression cloning of a cDNA for the major Fanconi anaemia gene, FAA.</title>
        <authorList>
            <person name="Lo Ten Foe J.R."/>
            <person name="Rooimans M.A."/>
            <person name="Bosnoyan-Collins L."/>
            <person name="Alon N."/>
            <person name="Wijker M."/>
            <person name="Parker L."/>
            <person name="Lightfoot J."/>
            <person name="Carreau M."/>
            <person name="Callen D.F."/>
            <person name="Savoia A."/>
            <person name="Cheng N.C."/>
            <person name="van Berkel C.G.M."/>
            <person name="Strunk M.H.P."/>
            <person name="Gille J.J.P."/>
            <person name="Pals G."/>
            <person name="Kruyt F.A.E."/>
            <person name="Pronk J.C."/>
            <person name="Arwert F."/>
            <person name="Buchwald M."/>
            <person name="Joenje H."/>
        </authorList>
    </citation>
    <scope>NUCLEOTIDE SEQUENCE [MRNA] (ISOFORM 1)</scope>
    <scope>VARIANTS SER-501 AND ILE-717</scope>
    <source>
        <tissue>Lymphoblast</tissue>
    </source>
</reference>
<reference key="2">
    <citation type="journal article" date="1997" name="Genomics">
        <title>The genomic organization of the Fanconi anemia group A (FAA) gene.</title>
        <authorList>
            <person name="Ianzano L."/>
            <person name="D'Apolito M."/>
            <person name="Centra M."/>
            <person name="Savino M."/>
            <person name="Levran O."/>
            <person name="Auerbach A.D."/>
            <person name="Cleton-Jansen A.-M."/>
            <person name="Doggett N.A."/>
            <person name="Pronk J.C."/>
            <person name="Tipping A.J."/>
            <person name="Gibson R.A."/>
            <person name="Mathew C.G."/>
            <person name="Whitmore S.A."/>
            <person name="Apostolou S."/>
            <person name="Callen F.C."/>
            <person name="Zelante L."/>
            <person name="Savoia A."/>
        </authorList>
    </citation>
    <scope>NUCLEOTIDE SEQUENCE [GENOMIC DNA] (ISOFORM 1)</scope>
    <scope>VARIANT SER-501</scope>
</reference>
<reference key="3">
    <citation type="submission" date="1998-08" db="EMBL/GenBank/DDBJ databases">
        <title>Sequencing of human Fanconi anemia complementation group A gene genomic region.</title>
        <authorList>
            <person name="Ricke D.O."/>
            <person name="Bruce D."/>
            <person name="Mundt M."/>
            <person name="Doggett N."/>
            <person name="Munk C."/>
            <person name="Saunders E."/>
            <person name="Robinson D."/>
            <person name="Jones M."/>
            <person name="Buckingham J."/>
            <person name="Chasteen L."/>
            <person name="Thompson S."/>
            <person name="Goodwin L."/>
            <person name="Bryant J."/>
            <person name="Tesmer J."/>
            <person name="Meincke L."/>
            <person name="Longmire J."/>
            <person name="White S."/>
            <person name="Ueng S."/>
            <person name="Tatum O."/>
            <person name="Campbell C."/>
            <person name="Fawcett J."/>
            <person name="Maltbie M."/>
            <person name="Deaven L."/>
        </authorList>
    </citation>
    <scope>NUCLEOTIDE SEQUENCE [GENOMIC DNA] (ISOFORM 1)</scope>
</reference>
<reference key="4">
    <citation type="submission" date="2004-04" db="EMBL/GenBank/DDBJ databases">
        <authorList>
            <consortium name="NIEHS SNPs program"/>
        </authorList>
    </citation>
    <scope>NUCLEOTIDE SEQUENCE [GENOMIC DNA]</scope>
    <scope>VARIANTS ALA-266; SER-501 AND ASP-809</scope>
</reference>
<reference key="5">
    <citation type="journal article" date="2004" name="Nat. Genet.">
        <title>Complete sequencing and characterization of 21,243 full-length human cDNAs.</title>
        <authorList>
            <person name="Ota T."/>
            <person name="Suzuki Y."/>
            <person name="Nishikawa T."/>
            <person name="Otsuki T."/>
            <person name="Sugiyama T."/>
            <person name="Irie R."/>
            <person name="Wakamatsu A."/>
            <person name="Hayashi K."/>
            <person name="Sato H."/>
            <person name="Nagai K."/>
            <person name="Kimura K."/>
            <person name="Makita H."/>
            <person name="Sekine M."/>
            <person name="Obayashi M."/>
            <person name="Nishi T."/>
            <person name="Shibahara T."/>
            <person name="Tanaka T."/>
            <person name="Ishii S."/>
            <person name="Yamamoto J."/>
            <person name="Saito K."/>
            <person name="Kawai Y."/>
            <person name="Isono Y."/>
            <person name="Nakamura Y."/>
            <person name="Nagahari K."/>
            <person name="Murakami K."/>
            <person name="Yasuda T."/>
            <person name="Iwayanagi T."/>
            <person name="Wagatsuma M."/>
            <person name="Shiratori A."/>
            <person name="Sudo H."/>
            <person name="Hosoiri T."/>
            <person name="Kaku Y."/>
            <person name="Kodaira H."/>
            <person name="Kondo H."/>
            <person name="Sugawara M."/>
            <person name="Takahashi M."/>
            <person name="Kanda K."/>
            <person name="Yokoi T."/>
            <person name="Furuya T."/>
            <person name="Kikkawa E."/>
            <person name="Omura Y."/>
            <person name="Abe K."/>
            <person name="Kamihara K."/>
            <person name="Katsuta N."/>
            <person name="Sato K."/>
            <person name="Tanikawa M."/>
            <person name="Yamazaki M."/>
            <person name="Ninomiya K."/>
            <person name="Ishibashi T."/>
            <person name="Yamashita H."/>
            <person name="Murakawa K."/>
            <person name="Fujimori K."/>
            <person name="Tanai H."/>
            <person name="Kimata M."/>
            <person name="Watanabe M."/>
            <person name="Hiraoka S."/>
            <person name="Chiba Y."/>
            <person name="Ishida S."/>
            <person name="Ono Y."/>
            <person name="Takiguchi S."/>
            <person name="Watanabe S."/>
            <person name="Yosida M."/>
            <person name="Hotuta T."/>
            <person name="Kusano J."/>
            <person name="Kanehori K."/>
            <person name="Takahashi-Fujii A."/>
            <person name="Hara H."/>
            <person name="Tanase T.-O."/>
            <person name="Nomura Y."/>
            <person name="Togiya S."/>
            <person name="Komai F."/>
            <person name="Hara R."/>
            <person name="Takeuchi K."/>
            <person name="Arita M."/>
            <person name="Imose N."/>
            <person name="Musashino K."/>
            <person name="Yuuki H."/>
            <person name="Oshima A."/>
            <person name="Sasaki N."/>
            <person name="Aotsuka S."/>
            <person name="Yoshikawa Y."/>
            <person name="Matsunawa H."/>
            <person name="Ichihara T."/>
            <person name="Shiohata N."/>
            <person name="Sano S."/>
            <person name="Moriya S."/>
            <person name="Momiyama H."/>
            <person name="Satoh N."/>
            <person name="Takami S."/>
            <person name="Terashima Y."/>
            <person name="Suzuki O."/>
            <person name="Nakagawa S."/>
            <person name="Senoh A."/>
            <person name="Mizoguchi H."/>
            <person name="Goto Y."/>
            <person name="Shimizu F."/>
            <person name="Wakebe H."/>
            <person name="Hishigaki H."/>
            <person name="Watanabe T."/>
            <person name="Sugiyama A."/>
            <person name="Takemoto M."/>
            <person name="Kawakami B."/>
            <person name="Yamazaki M."/>
            <person name="Watanabe K."/>
            <person name="Kumagai A."/>
            <person name="Itakura S."/>
            <person name="Fukuzumi Y."/>
            <person name="Fujimori Y."/>
            <person name="Komiyama M."/>
            <person name="Tashiro H."/>
            <person name="Tanigami A."/>
            <person name="Fujiwara T."/>
            <person name="Ono T."/>
            <person name="Yamada K."/>
            <person name="Fujii Y."/>
            <person name="Ozaki K."/>
            <person name="Hirao M."/>
            <person name="Ohmori Y."/>
            <person name="Kawabata A."/>
            <person name="Hikiji T."/>
            <person name="Kobatake N."/>
            <person name="Inagaki H."/>
            <person name="Ikema Y."/>
            <person name="Okamoto S."/>
            <person name="Okitani R."/>
            <person name="Kawakami T."/>
            <person name="Noguchi S."/>
            <person name="Itoh T."/>
            <person name="Shigeta K."/>
            <person name="Senba T."/>
            <person name="Matsumura K."/>
            <person name="Nakajima Y."/>
            <person name="Mizuno T."/>
            <person name="Morinaga M."/>
            <person name="Sasaki M."/>
            <person name="Togashi T."/>
            <person name="Oyama M."/>
            <person name="Hata H."/>
            <person name="Watanabe M."/>
            <person name="Komatsu T."/>
            <person name="Mizushima-Sugano J."/>
            <person name="Satoh T."/>
            <person name="Shirai Y."/>
            <person name="Takahashi Y."/>
            <person name="Nakagawa K."/>
            <person name="Okumura K."/>
            <person name="Nagase T."/>
            <person name="Nomura N."/>
            <person name="Kikuchi H."/>
            <person name="Masuho Y."/>
            <person name="Yamashita R."/>
            <person name="Nakai K."/>
            <person name="Yada T."/>
            <person name="Nakamura Y."/>
            <person name="Ohara O."/>
            <person name="Isogai T."/>
            <person name="Sugano S."/>
        </authorList>
    </citation>
    <scope>NUCLEOTIDE SEQUENCE [LARGE SCALE MRNA] (ISOFORM 3)</scope>
    <scope>VARIANT ILE-717</scope>
</reference>
<reference key="6">
    <citation type="journal article" date="2004" name="Nature">
        <title>The sequence and analysis of duplication-rich human chromosome 16.</title>
        <authorList>
            <person name="Martin J."/>
            <person name="Han C."/>
            <person name="Gordon L.A."/>
            <person name="Terry A."/>
            <person name="Prabhakar S."/>
            <person name="She X."/>
            <person name="Xie G."/>
            <person name="Hellsten U."/>
            <person name="Chan Y.M."/>
            <person name="Altherr M."/>
            <person name="Couronne O."/>
            <person name="Aerts A."/>
            <person name="Bajorek E."/>
            <person name="Black S."/>
            <person name="Blumer H."/>
            <person name="Branscomb E."/>
            <person name="Brown N.C."/>
            <person name="Bruno W.J."/>
            <person name="Buckingham J.M."/>
            <person name="Callen D.F."/>
            <person name="Campbell C.S."/>
            <person name="Campbell M.L."/>
            <person name="Campbell E.W."/>
            <person name="Caoile C."/>
            <person name="Challacombe J.F."/>
            <person name="Chasteen L.A."/>
            <person name="Chertkov O."/>
            <person name="Chi H.C."/>
            <person name="Christensen M."/>
            <person name="Clark L.M."/>
            <person name="Cohn J.D."/>
            <person name="Denys M."/>
            <person name="Detter J.C."/>
            <person name="Dickson M."/>
            <person name="Dimitrijevic-Bussod M."/>
            <person name="Escobar J."/>
            <person name="Fawcett J.J."/>
            <person name="Flowers D."/>
            <person name="Fotopulos D."/>
            <person name="Glavina T."/>
            <person name="Gomez M."/>
            <person name="Gonzales E."/>
            <person name="Goodstein D."/>
            <person name="Goodwin L.A."/>
            <person name="Grady D.L."/>
            <person name="Grigoriev I."/>
            <person name="Groza M."/>
            <person name="Hammon N."/>
            <person name="Hawkins T."/>
            <person name="Haydu L."/>
            <person name="Hildebrand C.E."/>
            <person name="Huang W."/>
            <person name="Israni S."/>
            <person name="Jett J."/>
            <person name="Jewett P.B."/>
            <person name="Kadner K."/>
            <person name="Kimball H."/>
            <person name="Kobayashi A."/>
            <person name="Krawczyk M.-C."/>
            <person name="Leyba T."/>
            <person name="Longmire J.L."/>
            <person name="Lopez F."/>
            <person name="Lou Y."/>
            <person name="Lowry S."/>
            <person name="Ludeman T."/>
            <person name="Manohar C.F."/>
            <person name="Mark G.A."/>
            <person name="McMurray K.L."/>
            <person name="Meincke L.J."/>
            <person name="Morgan J."/>
            <person name="Moyzis R.K."/>
            <person name="Mundt M.O."/>
            <person name="Munk A.C."/>
            <person name="Nandkeshwar R.D."/>
            <person name="Pitluck S."/>
            <person name="Pollard M."/>
            <person name="Predki P."/>
            <person name="Parson-Quintana B."/>
            <person name="Ramirez L."/>
            <person name="Rash S."/>
            <person name="Retterer J."/>
            <person name="Ricke D.O."/>
            <person name="Robinson D.L."/>
            <person name="Rodriguez A."/>
            <person name="Salamov A."/>
            <person name="Saunders E.H."/>
            <person name="Scott D."/>
            <person name="Shough T."/>
            <person name="Stallings R.L."/>
            <person name="Stalvey M."/>
            <person name="Sutherland R.D."/>
            <person name="Tapia R."/>
            <person name="Tesmer J.G."/>
            <person name="Thayer N."/>
            <person name="Thompson L.S."/>
            <person name="Tice H."/>
            <person name="Torney D.C."/>
            <person name="Tran-Gyamfi M."/>
            <person name="Tsai M."/>
            <person name="Ulanovsky L.E."/>
            <person name="Ustaszewska A."/>
            <person name="Vo N."/>
            <person name="White P.S."/>
            <person name="Williams A.L."/>
            <person name="Wills P.L."/>
            <person name="Wu J.-R."/>
            <person name="Wu K."/>
            <person name="Yang J."/>
            <person name="DeJong P."/>
            <person name="Bruce D."/>
            <person name="Doggett N.A."/>
            <person name="Deaven L."/>
            <person name="Schmutz J."/>
            <person name="Grimwood J."/>
            <person name="Richardson P."/>
            <person name="Rokhsar D.S."/>
            <person name="Eichler E.E."/>
            <person name="Gilna P."/>
            <person name="Lucas S.M."/>
            <person name="Myers R.M."/>
            <person name="Rubin E.M."/>
            <person name="Pennacchio L.A."/>
        </authorList>
    </citation>
    <scope>NUCLEOTIDE SEQUENCE [LARGE SCALE GENOMIC DNA]</scope>
</reference>
<reference key="7">
    <citation type="journal article" date="2004" name="Genome Res.">
        <title>The status, quality, and expansion of the NIH full-length cDNA project: the Mammalian Gene Collection (MGC).</title>
        <authorList>
            <consortium name="The MGC Project Team"/>
        </authorList>
    </citation>
    <scope>NUCLEOTIDE SEQUENCE [LARGE SCALE MRNA] (ISOFORM 2)</scope>
    <scope>VARIANT ALA-266</scope>
    <source>
        <tissue>Cervix</tissue>
    </source>
</reference>
<reference key="8">
    <citation type="journal article" date="1998" name="Genomics">
        <title>Fine exon-intron structure of the Fanconi anemia group A (FAA) gene and characterization of two genomic deletions.</title>
        <authorList>
            <person name="Centra M."/>
            <person name="Memeo E."/>
            <person name="D'Apolito M."/>
            <person name="Savino M."/>
            <person name="Ianzano L."/>
            <person name="Notarangelo A."/>
            <person name="Liu J."/>
            <person name="Doggett N.A."/>
            <person name="Zelante L."/>
            <person name="Savoia A."/>
        </authorList>
    </citation>
    <scope>NUCLEOTIDE SEQUENCE [GENOMIC DNA] OF 491-571 AND 610-671</scope>
    <scope>VARIANT SER-501</scope>
</reference>
<reference key="9">
    <citation type="journal article" date="1998" name="Hum. Mutat.">
        <title>Identification of Alu-mediated deletions in the Fanconi anemia gene FAA.</title>
        <authorList>
            <person name="Levran O."/>
            <person name="Doggett N.A."/>
            <person name="Auerbach A.D."/>
        </authorList>
    </citation>
    <scope>NUCLEOTIDE SEQUENCE [GENOMIC DNA] OF 491-542</scope>
</reference>
<reference key="10">
    <citation type="journal article" date="1998" name="Mol. Cell. Biol.">
        <title>Functional activity of the Fanconi anemia protein FAA requires FAC binding and nuclear localization.</title>
        <authorList>
            <person name="Naef D."/>
            <person name="Kupfer G.M."/>
            <person name="Suliman A."/>
            <person name="Lambert K."/>
            <person name="D'Andrea A.D."/>
        </authorList>
    </citation>
    <scope>SUBCELLULAR LOCATION</scope>
    <scope>MUTAGENESIS</scope>
</reference>
<reference key="11">
    <citation type="journal article" date="2003" name="Mol. Cell. Biol.">
        <title>A multiprotein nuclear complex connects Fanconi anemia and Bloom syndrome.</title>
        <authorList>
            <person name="Meetei A.R."/>
            <person name="Sechi S."/>
            <person name="Wallisch M."/>
            <person name="Yang D."/>
            <person name="Young M.K."/>
            <person name="Joenje H."/>
            <person name="Hoatlin M.E."/>
            <person name="Wang W."/>
        </authorList>
    </citation>
    <scope>IDENTIFICATION IN A COMPLEX WITH FANCC; FANCE; FANCF; FANCG AND FANCL</scope>
</reference>
<reference key="12">
    <citation type="journal article" date="1998" name="Proc. Natl. Acad. Sci. U.S.A.">
        <title>The Fanconi anemia pathway requires FAA phosphorylation and FAA/FAC nuclear accumulation.</title>
        <authorList>
            <person name="Yamashita T."/>
            <person name="Kupfer G.M."/>
            <person name="Naf D."/>
            <person name="Suliman A."/>
            <person name="Joenje H."/>
            <person name="Asano S."/>
            <person name="D'Andrea A.D."/>
        </authorList>
    </citation>
    <scope>PHOSPHORYLATION</scope>
</reference>
<reference key="13">
    <citation type="journal article" date="2004" name="J. Biol. Chem.">
        <title>The Fanconi anemia proteins functionally interact with the protein kinase regulated by RNA (PKR).</title>
        <authorList>
            <person name="Zhang X."/>
            <person name="Li J."/>
            <person name="Sejas D.P."/>
            <person name="Rathbun K.R."/>
            <person name="Bagby G.C."/>
            <person name="Pang Q."/>
        </authorList>
    </citation>
    <scope>IDENTIFICATION IN A COMPLEX WITH EIF2AK2; FANCC; FANCG AND HSP70</scope>
</reference>
<reference key="14">
    <citation type="journal article" date="2004" name="Nat. Genet.">
        <title>X-linked inheritance of Fanconi anemia complementation group B.</title>
        <authorList>
            <person name="Meetei A.R."/>
            <person name="Levitus M."/>
            <person name="Xue Y."/>
            <person name="Medhurst A.L."/>
            <person name="Zwaan M."/>
            <person name="Ling C."/>
            <person name="Rooimans M.A."/>
            <person name="Bier P."/>
            <person name="Hoatlin M."/>
            <person name="Pals G."/>
            <person name="de Winter J.P."/>
            <person name="Wang W."/>
            <person name="Joenje H."/>
        </authorList>
    </citation>
    <scope>IDENTIFICATION IN A COMPLEX WITH FANCB; FANCC; FANCE; FANCF; FANCG AND FANCL</scope>
</reference>
<reference key="15">
    <citation type="journal article" date="2005" name="Nat. Genet.">
        <title>A human ortholog of archaeal DNA repair protein Hef is defective in Fanconi anemia complementation group M.</title>
        <authorList>
            <person name="Meetei A.R."/>
            <person name="Medhurst A.L."/>
            <person name="Ling C."/>
            <person name="Xue Y."/>
            <person name="Singh T.R."/>
            <person name="Bier P."/>
            <person name="Steltenpool J."/>
            <person name="Stone S."/>
            <person name="Dokal I."/>
            <person name="Mathew C.G."/>
            <person name="Hoatlin M."/>
            <person name="Joenje H."/>
            <person name="de Winter J.P."/>
            <person name="Wang W."/>
        </authorList>
    </citation>
    <scope>IDENTIFICATION IN A COMPLEX WITH FANCB; FANCC; FANCE; FANCF; FANCG; FANCL AND FANCM</scope>
</reference>
<reference key="16">
    <citation type="journal article" date="2007" name="Science">
        <title>ATM and ATR substrate analysis reveals extensive protein networks responsive to DNA damage.</title>
        <authorList>
            <person name="Matsuoka S."/>
            <person name="Ballif B.A."/>
            <person name="Smogorzewska A."/>
            <person name="McDonald E.R. III"/>
            <person name="Hurov K.E."/>
            <person name="Luo J."/>
            <person name="Bakalarski C.E."/>
            <person name="Zhao Z."/>
            <person name="Solimini N."/>
            <person name="Lerenthal Y."/>
            <person name="Shiloh Y."/>
            <person name="Gygi S.P."/>
            <person name="Elledge S.J."/>
        </authorList>
    </citation>
    <scope>PHOSPHORYLATION [LARGE SCALE ANALYSIS] AT SER-1449</scope>
    <scope>IDENTIFICATION BY MASS SPECTROMETRY [LARGE SCALE ANALYSIS]</scope>
    <source>
        <tissue>Embryonic kidney</tissue>
    </source>
</reference>
<reference key="17">
    <citation type="journal article" date="2008" name="Blood">
        <title>HES1 is a novel interactor of the Fanconi anemia core complex.</title>
        <authorList>
            <person name="Tremblay C.S."/>
            <person name="Huang F.F."/>
            <person name="Habi O."/>
            <person name="Huard C.C."/>
            <person name="Godin C."/>
            <person name="Levesque G."/>
            <person name="Carreau M."/>
        </authorList>
    </citation>
    <scope>INTERACTION WITH HES1</scope>
    <scope>SUBCELLULAR LOCATION</scope>
</reference>
<reference key="18">
    <citation type="journal article" date="2008" name="Mol. Cell">
        <title>Kinase-selective enrichment enables quantitative phosphoproteomics of the kinome across the cell cycle.</title>
        <authorList>
            <person name="Daub H."/>
            <person name="Olsen J.V."/>
            <person name="Bairlein M."/>
            <person name="Gnad F."/>
            <person name="Oppermann F.S."/>
            <person name="Korner R."/>
            <person name="Greff Z."/>
            <person name="Keri G."/>
            <person name="Stemmann O."/>
            <person name="Mann M."/>
        </authorList>
    </citation>
    <scope>PHOSPHORYLATION [LARGE SCALE ANALYSIS] AT SER-1449</scope>
    <scope>IDENTIFICATION BY MASS SPECTROMETRY [LARGE SCALE ANALYSIS]</scope>
    <source>
        <tissue>Cervix carcinoma</tissue>
    </source>
</reference>
<reference key="19">
    <citation type="journal article" date="2012" name="Blood">
        <title>FAAP20: a novel ubiquitin-binding FA nuclear core-complex protein required for functional integrity of the FA-BRCA DNA repair pathway.</title>
        <authorList>
            <person name="Ali A.M."/>
            <person name="Pradhan A."/>
            <person name="Singh T.R."/>
            <person name="Du C."/>
            <person name="Li J."/>
            <person name="Wahengbam K."/>
            <person name="Grassman E."/>
            <person name="Auerbach A.D."/>
            <person name="Pang Q."/>
            <person name="Meetei A.R."/>
        </authorList>
    </citation>
    <scope>IDENTIFICATION IN THE FA COMPLEX</scope>
    <scope>INTERACTION WITH C1ORF86</scope>
</reference>
<reference key="20">
    <citation type="journal article" date="2012" name="Mol. Cell">
        <title>A ubiquitin-binding protein, FAAP20, links RNF8-mediated ubiquitination to the Fanconi anemia DNA repair network.</title>
        <authorList>
            <person name="Yan Z."/>
            <person name="Guo R."/>
            <person name="Paramasivam M."/>
            <person name="Shen W."/>
            <person name="Ling C."/>
            <person name="Fox D. III"/>
            <person name="Wang Y."/>
            <person name="Oostra A.B."/>
            <person name="Kuehl J."/>
            <person name="Lee D.Y."/>
            <person name="Takata M."/>
            <person name="Hoatlin M.E."/>
            <person name="Schindler D."/>
            <person name="Joenje H."/>
            <person name="de Winter J.P."/>
            <person name="Li L."/>
            <person name="Seidman M.M."/>
            <person name="Wang W."/>
        </authorList>
    </citation>
    <scope>IDENTIFICATION IN THE FA COMPLEX</scope>
    <scope>INTERACTION WITH C1ORF86</scope>
</reference>
<reference key="21">
    <citation type="journal article" date="2012" name="Nat. Struct. Mol. Biol.">
        <title>Regulation of Rev1 by the Fanconi anemia core complex.</title>
        <authorList>
            <person name="Kim H."/>
            <person name="Yang K."/>
            <person name="Dejsuphong D."/>
            <person name="D'Andrea A.D."/>
        </authorList>
    </citation>
    <scope>IDENTIFICATION IN THE FA COMPLEX</scope>
</reference>
<reference key="22">
    <citation type="journal article" date="2013" name="J. Proteome Res.">
        <title>Toward a comprehensive characterization of a human cancer cell phosphoproteome.</title>
        <authorList>
            <person name="Zhou H."/>
            <person name="Di Palma S."/>
            <person name="Preisinger C."/>
            <person name="Peng M."/>
            <person name="Polat A.N."/>
            <person name="Heck A.J."/>
            <person name="Mohammed S."/>
        </authorList>
    </citation>
    <scope>PHOSPHORYLATION [LARGE SCALE ANALYSIS] AT SER-1449</scope>
    <scope>IDENTIFICATION BY MASS SPECTROMETRY [LARGE SCALE ANALYSIS]</scope>
    <source>
        <tissue>Cervix carcinoma</tissue>
        <tissue>Erythroleukemia</tissue>
    </source>
</reference>
<reference key="23">
    <citation type="journal article" date="1997" name="Am. J. Hum. Genet.">
        <title>Mutations of the Fanconi anemia group A gene (FAA) in Italian patients.</title>
        <authorList>
            <person name="Savino M."/>
            <person name="Ianzano L."/>
            <person name="Strippoli P."/>
            <person name="Ramenghi U."/>
            <person name="Arslanian A."/>
            <person name="Bagnara G.P."/>
            <person name="Joenje H."/>
            <person name="Zelante L."/>
            <person name="Savoia A."/>
        </authorList>
    </citation>
    <scope>VARIANT FANCA TYR-1359</scope>
    <scope>VARIANTS ALA-266; SER-501 AND ASP-809</scope>
</reference>
<reference key="24">
    <citation type="journal article" date="1997" name="Proc. Natl. Acad. Sci. U.S.A.">
        <title>Sequence variation in the Fanconi anemia gene FAA.</title>
        <authorList>
            <person name="Levran O."/>
            <person name="Erlich T."/>
            <person name="Magdalena N."/>
            <person name="Gregory J.J."/>
            <person name="Batish S.D."/>
            <person name="Verlander P.C."/>
            <person name="Auerbach A.D."/>
        </authorList>
    </citation>
    <scope>VARIANTS FANCA PHE-244; CYS-435; ARG-492; PRO-817; PRO-845; LEU-1055; GLY-1117; GLU-1128; ALA-1131; PHE-1263 DEL; ARG-1302 AND ASP-1417</scope>
    <scope>VARIANTS LYS-8; VAL-181; GLY-252; SER-501; LEU-739; ASP-809 AND ALA-1328</scope>
</reference>
<reference key="25">
    <citation type="journal article" date="1999" name="Am. J. Hum. Genet.">
        <title>High frequency of large intragenic deletions in the Fanconi anemia group A gene.</title>
        <authorList>
            <person name="Morgan N.V."/>
            <person name="Tipping A.J."/>
            <person name="Joenje H."/>
            <person name="Mathew C.G."/>
        </authorList>
    </citation>
    <scope>VARIANTS FANCA ASN-598; PRO-1110; LEU-1262; PHE-1263 DEL; LEU-1324 AND ILE-1360</scope>
</reference>
<reference key="26">
    <citation type="journal article" date="1999" name="Eur. J. Hum. Genet.">
        <title>Heterogeneous spectrum of mutations in the Fanconi anaemia group A gene.</title>
        <authorList>
            <person name="Wijker M."/>
            <person name="Morgan N.V."/>
            <person name="Herterich S."/>
            <person name="van Berkel C.G."/>
            <person name="Tipping A.J."/>
            <person name="Gross H.J."/>
            <person name="Gille J.J."/>
            <person name="Pals G."/>
            <person name="Savino M."/>
            <person name="Altay C."/>
            <person name="Mohan S."/>
            <person name="Dokal I."/>
            <person name="Cavenagh J."/>
            <person name="Marsh J."/>
            <person name="van Weel M."/>
            <person name="Ortega J.J."/>
            <person name="Schuler D."/>
            <person name="Samochatova E."/>
            <person name="Karwacki M."/>
            <person name="Bekassy A.N."/>
            <person name="Abecasis M."/>
            <person name="Ebell W."/>
            <person name="Kwee M.L."/>
            <person name="de Ravel T."/>
            <person name="Mathew C.G."/>
        </authorList>
    </citation>
    <scope>VARIANTS FANCA ASN-598; ARG-858 AND PHE-1088</scope>
</reference>
<reference key="27">
    <citation type="journal article" date="1999" name="Exp. Hematol.">
        <title>A patient-derived mutant form of the Fanconi anemia protein, FANCA, is defective in nuclear accumulation.</title>
        <authorList>
            <person name="Kupfer G."/>
            <person name="Naef D."/>
            <person name="Garcia-Higuera I."/>
            <person name="Wasik J."/>
            <person name="Cheng A."/>
            <person name="Yamashita T."/>
            <person name="Tipping A."/>
            <person name="Morgan N."/>
            <person name="Mathew C.G."/>
            <person name="D'Andrea A.D."/>
        </authorList>
    </citation>
    <scope>VARIANTS FANCA PRO-1110 AND GLY-1117</scope>
    <scope>CHARACTERIZATION OF VARIANT FANCA PRO-1110</scope>
</reference>
<reference key="28">
    <citation type="journal article" date="1999" name="J. Hum. Genet.">
        <title>Four novel mutations of the Fanconi anemia group A gene (FAA) in Japanese patients.</title>
        <authorList>
            <person name="Nakamura A."/>
            <person name="Matsuura S."/>
            <person name="Tauchi H."/>
            <person name="Hanada R."/>
            <person name="Ohashi H."/>
            <person name="Hasegawa T."/>
            <person name="Honda K."/>
            <person name="Masuno M."/>
            <person name="Imaizumi K."/>
            <person name="Sugita K."/>
            <person name="Ide T."/>
            <person name="Komatsu K."/>
        </authorList>
    </citation>
    <scope>VARIANT FANCA TRP-1055</scope>
</reference>
<reference key="29">
    <citation type="journal article" date="2000" name="Br. J. Haematol.">
        <title>Fanconi anaemia group A (FANCA) mutations in Israeli non-Ashkenazi Jewish patients.</title>
        <authorList>
            <person name="Tamary H."/>
            <person name="Bar-Yam R."/>
            <person name="Shalmon L."/>
            <person name="Rachavi G."/>
            <person name="Krostichevsky M."/>
            <person name="Elhasid R."/>
            <person name="Barak Y."/>
            <person name="Kapelushnik J."/>
            <person name="Yaniv I."/>
            <person name="Auerbach A.D."/>
            <person name="Zaizov R."/>
        </authorList>
    </citation>
    <scope>VARIANT FANCA ARG-858</scope>
</reference>
<reference key="30">
    <citation type="journal article" date="2000" name="J. Hum. Genet.">
        <title>Novel mutations of the FANCG gene causing alternative splicing in Japanese Fanconi anemia.</title>
        <authorList>
            <person name="Yamada T."/>
            <person name="Tachibana A."/>
            <person name="Shimizu T."/>
            <person name="Mugishima H."/>
            <person name="Okubo M."/>
            <person name="Sasaki M.S."/>
        </authorList>
    </citation>
    <scope>VARIANT FANCA PRO-1082</scope>
</reference>
<reference key="31">
    <citation type="journal article" date="2008" name="Hum. Mutat.">
        <title>Genetic subtyping of Fanconi anemia by comprehensive mutation screening.</title>
        <authorList>
            <person name="Ameziane N."/>
            <person name="Errami A."/>
            <person name="Leveille F."/>
            <person name="Fontaine C."/>
            <person name="de Vries Y."/>
            <person name="van Spaendonk R.M."/>
            <person name="de Winter J.P."/>
            <person name="Pals G."/>
            <person name="Joenje H."/>
        </authorList>
    </citation>
    <scope>VARIANTS FANCA ARG-210; PRO-660; ASP-843; PRO-869; PRO-1249; LEU-1324; THR-1346 AND HIS-1400</scope>
    <scope>VARIANTS GLU-761; GLN-951; TRP-951 AND ALA-1131</scope>
</reference>
<reference key="32">
    <citation type="journal article" date="2008" name="Nature">
        <title>DNA sequencing of a cytogenetically normal acute myeloid leukaemia genome.</title>
        <authorList>
            <person name="Ley T.J."/>
            <person name="Mardis E.R."/>
            <person name="Ding L."/>
            <person name="Fulton B."/>
            <person name="McLellan M.D."/>
            <person name="Chen K."/>
            <person name="Dooling D."/>
            <person name="Dunford-Shore B.H."/>
            <person name="McGrath S."/>
            <person name="Hickenbotham M."/>
            <person name="Cook L."/>
            <person name="Abbott R."/>
            <person name="Larson D.E."/>
            <person name="Koboldt D.C."/>
            <person name="Pohl C."/>
            <person name="Smith S."/>
            <person name="Hawkins A."/>
            <person name="Abbott S."/>
            <person name="Locke D."/>
            <person name="Hillier L.W."/>
            <person name="Miner T."/>
            <person name="Fulton L."/>
            <person name="Magrini V."/>
            <person name="Wylie T."/>
            <person name="Glasscock J."/>
            <person name="Conyers J."/>
            <person name="Sander N."/>
            <person name="Shi X."/>
            <person name="Osborne J.R."/>
            <person name="Minx P."/>
            <person name="Gordon D."/>
            <person name="Chinwalla A."/>
            <person name="Zhao Y."/>
            <person name="Ries R.E."/>
            <person name="Payton J.E."/>
            <person name="Westervelt P."/>
            <person name="Tomasson M.H."/>
            <person name="Watson M."/>
            <person name="Baty J."/>
            <person name="Ivanovich J."/>
            <person name="Heath S."/>
            <person name="Shannon W.D."/>
            <person name="Nagarajan R."/>
            <person name="Walter M.J."/>
            <person name="Link D.C."/>
            <person name="Graubert T.A."/>
            <person name="DiPersio J.F."/>
            <person name="Wilson R.K."/>
        </authorList>
    </citation>
    <scope>VARIANTS [LARGE SCALE ANALYSIS] ALA-266; VAL-412; SER-501; ASP-809 AND PHE-1088</scope>
</reference>
<feature type="chain" id="PRO_0000087179" description="Fanconi anemia group A protein">
    <location>
        <begin position="1"/>
        <end position="1455"/>
    </location>
</feature>
<feature type="short sequence motif" description="Nuclear localization signal" evidence="1">
    <location>
        <begin position="18"/>
        <end position="34"/>
    </location>
</feature>
<feature type="modified residue" description="Phosphoserine" evidence="29 30 31">
    <location>
        <position position="1449"/>
    </location>
</feature>
<feature type="splice variant" id="VSP_007039" description="In isoform 2." evidence="28">
    <location>
        <begin position="298"/>
        <end position="1455"/>
    </location>
</feature>
<feature type="splice variant" id="VSP_054682" description="In isoform 3." evidence="27">
    <original>GNPVELITKARLFLLQLIPRCPKKSFSHVAELLADRGDCDPEVSAALQSRQQAAPDADLSQEPHLF</original>
    <variation>AGQPRGTDNKSSSFSAAVNTSVPEKELLTRGRAAG</variation>
    <location>
        <begin position="1390"/>
        <end position="1455"/>
    </location>
</feature>
<feature type="sequence variant" id="VAR_009637" description="In dbSNP:rs1800282.">
    <original>V</original>
    <variation>D</variation>
    <location>
        <position position="6"/>
    </location>
</feature>
<feature type="sequence variant" id="VAR_009638" description="In FANCA; benign; dbSNP:rs76275444." evidence="21">
    <original>N</original>
    <variation>K</variation>
    <location>
        <position position="8"/>
    </location>
</feature>
<feature type="sequence variant" id="VAR_050982" description="In dbSNP:rs34491278.">
    <original>T</original>
    <variation>S</variation>
    <location>
        <position position="131"/>
    </location>
</feature>
<feature type="sequence variant" id="VAR_050983" description="In dbSNP:rs35566151.">
    <original>S</original>
    <variation>F</variation>
    <location>
        <position position="176"/>
    </location>
</feature>
<feature type="sequence variant" id="VAR_009639" description="In FANCA; benign; dbSNP:rs17232246." evidence="21">
    <original>A</original>
    <variation>V</variation>
    <location>
        <position position="181"/>
    </location>
</feature>
<feature type="sequence variant" id="VAR_038012" description="In FANCA; dbSNP:rs2040601073." evidence="13">
    <original>L</original>
    <variation>R</variation>
    <location>
        <position position="210"/>
    </location>
</feature>
<feature type="sequence variant" id="VAR_009640" description="In FANCA; dbSNP:rs2040522671." evidence="21">
    <original>L</original>
    <variation>F</variation>
    <location>
        <position position="244"/>
    </location>
</feature>
<feature type="sequence variant" id="VAR_009641" description="In FANCA; benign; dbSNP:rs17225943." evidence="21">
    <original>D</original>
    <variation>G</variation>
    <location>
        <position position="252"/>
    </location>
</feature>
<feature type="sequence variant" id="VAR_017496" description="In dbSNP:rs7190823." evidence="10 15 22 26">
    <original>T</original>
    <variation>A</variation>
    <location>
        <position position="266"/>
    </location>
</feature>
<feature type="sequence variant" id="VAR_050984" description="In dbSNP:rs35880318.">
    <original>A</original>
    <variation>G</variation>
    <location>
        <position position="277"/>
    </location>
</feature>
<feature type="sequence variant" id="VAR_050985" description="In dbSNP:rs13336566.">
    <original>Q</original>
    <variation>R</variation>
    <location>
        <position position="286"/>
    </location>
</feature>
<feature type="sequence variant" id="VAR_050986" description="In dbSNP:rs11646374." evidence="15">
    <original>A</original>
    <variation>V</variation>
    <location>
        <position position="412"/>
    </location>
</feature>
<feature type="sequence variant" id="VAR_009642" description="In FANCA; dbSNP:rs148473140." evidence="21">
    <original>R</original>
    <variation>C</variation>
    <location>
        <position position="435"/>
    </location>
</feature>
<feature type="sequence variant" id="VAR_009643" description="In FANCA; dbSNP:rs925457555." evidence="21">
    <original>H</original>
    <variation>R</variation>
    <location>
        <position position="492"/>
    </location>
</feature>
<feature type="sequence variant" id="VAR_009644" description="In dbSNP:rs2239359." evidence="15 19 20 21 22 23 26">
    <original>G</original>
    <variation>S</variation>
    <location>
        <position position="501"/>
    </location>
</feature>
<feature type="sequence variant" id="VAR_017497" description="In FANCA; dbSNP:rs2039605345." evidence="2 4">
    <original>D</original>
    <variation>N</variation>
    <location>
        <position position="598"/>
    </location>
</feature>
<feature type="sequence variant" id="VAR_050987" description="In dbSNP:rs17232910.">
    <original>P</original>
    <variation>A</variation>
    <location>
        <position position="643"/>
    </location>
</feature>
<feature type="sequence variant" id="VAR_038013" description="In FANCA; dbSNP:rs1567621042." evidence="13">
    <original>L</original>
    <variation>P</variation>
    <location>
        <position position="660"/>
    </location>
</feature>
<feature type="sequence variant" id="VAR_061649" description="In dbSNP:rs1131660." evidence="8 19">
    <original>M</original>
    <variation>I</variation>
    <location>
        <position position="717"/>
    </location>
</feature>
<feature type="sequence variant" id="VAR_009645" description="In dbSNP:rs45441106." evidence="21">
    <original>P</original>
    <variation>L</variation>
    <location>
        <position position="739"/>
    </location>
</feature>
<feature type="sequence variant" id="VAR_038014" description="In dbSNP:rs2039276663." evidence="13">
    <original>V</original>
    <variation>E</variation>
    <location>
        <position position="761"/>
    </location>
</feature>
<feature type="sequence variant" id="VAR_009646" description="In dbSNP:rs7195066." evidence="15 21 22 26">
    <original>G</original>
    <variation>D</variation>
    <location>
        <position position="809"/>
    </location>
</feature>
<feature type="sequence variant" id="VAR_009647" description="In FANCA; dbSNP:rs1307805145." evidence="21">
    <original>L</original>
    <variation>P</variation>
    <location>
        <position position="817"/>
    </location>
</feature>
<feature type="sequence variant" id="VAR_038015" description="In FANCA; dbSNP:rs374030577." evidence="13">
    <original>Y</original>
    <variation>D</variation>
    <location>
        <position position="843"/>
    </location>
</feature>
<feature type="sequence variant" id="VAR_009648" description="In FANCA; dbSNP:rs1173704265." evidence="21">
    <original>L</original>
    <variation>P</variation>
    <location>
        <position position="845"/>
    </location>
</feature>
<feature type="sequence variant" id="VAR_017498" description="In FANCA; dbSNP:rs17233141." evidence="2 6">
    <original>S</original>
    <variation>R</variation>
    <location>
        <position position="858"/>
    </location>
</feature>
<feature type="sequence variant" id="VAR_038016" description="In FANCA; dbSNP:rs780825099." evidence="13">
    <original>Q</original>
    <variation>P</variation>
    <location>
        <position position="869"/>
    </location>
</feature>
<feature type="sequence variant" id="VAR_038017" description="In dbSNP:rs755922289." evidence="13">
    <original>R</original>
    <variation>Q</variation>
    <location>
        <position position="951"/>
    </location>
</feature>
<feature type="sequence variant" id="VAR_038018" description="In dbSNP:rs755546887." evidence="13">
    <original>R</original>
    <variation>W</variation>
    <location>
        <position position="951"/>
    </location>
</feature>
<feature type="sequence variant" id="VAR_009649" description="In FANCA; dbSNP:rs1429943036." evidence="21">
    <original>R</original>
    <variation>L</variation>
    <location>
        <position position="1055"/>
    </location>
</feature>
<feature type="sequence variant" id="VAR_017499" description="In FANCA; dbSNP:rs753063086." evidence="25">
    <original>R</original>
    <variation>W</variation>
    <location>
        <position position="1055"/>
    </location>
</feature>
<feature type="sequence variant" id="VAR_017500" description="In FANCA." evidence="5">
    <original>L</original>
    <variation>P</variation>
    <location>
        <position position="1082"/>
    </location>
</feature>
<feature type="sequence variant" id="VAR_017501" description="In FANCA; benign; dbSNP:rs17233497." evidence="2 15">
    <original>S</original>
    <variation>F</variation>
    <location>
        <position position="1088"/>
    </location>
</feature>
<feature type="sequence variant" id="VAR_009650" description="In FANCA; loss of function; dbSNP:rs752837228." evidence="3 4">
    <original>H</original>
    <variation>P</variation>
    <location>
        <position position="1110"/>
    </location>
</feature>
<feature type="sequence variant" id="VAR_009651" description="In FANCA; dbSNP:rs149277003." evidence="3 21">
    <original>R</original>
    <variation>G</variation>
    <location>
        <position position="1117"/>
    </location>
</feature>
<feature type="sequence variant" id="VAR_009652" description="In FANCA; dbSNP:rs1439817346." evidence="21">
    <original>Q</original>
    <variation>E</variation>
    <location>
        <position position="1128"/>
    </location>
</feature>
<feature type="sequence variant" id="VAR_009653" description="In FANCA; dbSNP:rs574034197." evidence="13 21">
    <original>T</original>
    <variation>A</variation>
    <location>
        <position position="1131"/>
    </location>
</feature>
<feature type="sequence variant" id="VAR_038019" description="In FANCA; dbSNP:rs753316789." evidence="13">
    <original>L</original>
    <variation>P</variation>
    <location>
        <position position="1249"/>
    </location>
</feature>
<feature type="sequence variant" id="VAR_017502" description="In FANCA; dbSNP:rs1555534579." evidence="4">
    <original>F</original>
    <variation>L</variation>
    <location>
        <position position="1262"/>
    </location>
</feature>
<feature type="sequence variant" id="VAR_009654" description="In FANCA." evidence="4 21">
    <location>
        <position position="1263"/>
    </location>
</feature>
<feature type="sequence variant" id="VAR_009655" description="In dbSNP:rs17227354.">
    <original>V</original>
    <variation>I</variation>
    <location>
        <position position="1287"/>
    </location>
</feature>
<feature type="sequence variant" id="VAR_009656" description="In FANCA; dbSNP:rs878853665." evidence="21">
    <original>W</original>
    <variation>R</variation>
    <location>
        <position position="1302"/>
    </location>
</feature>
<feature type="sequence variant" id="VAR_017505" description="In FANCA; dbSNP:rs182657062." evidence="4 13">
    <original>P</original>
    <variation>L</variation>
    <location>
        <position position="1324"/>
    </location>
</feature>
<feature type="sequence variant" id="VAR_009657" description="In dbSNP:rs9282681." evidence="21">
    <original>T</original>
    <variation>A</variation>
    <location>
        <position position="1328"/>
    </location>
</feature>
<feature type="sequence variant" id="VAR_038020" description="In FANCA; likely benign; dbSNP:rs17227396." evidence="13">
    <original>A</original>
    <variation>T</variation>
    <location>
        <position position="1346"/>
    </location>
</feature>
<feature type="sequence variant" id="VAR_017503" description="In FANCA; dbSNP:rs1555533313." evidence="22">
    <original>D</original>
    <variation>Y</variation>
    <location>
        <position position="1359"/>
    </location>
</feature>
<feature type="sequence variant" id="VAR_017504" description="In FANCA; dbSNP:rs1555533300." evidence="4">
    <original>M</original>
    <variation>I</variation>
    <location>
        <position position="1360"/>
    </location>
</feature>
<feature type="sequence variant" id="VAR_038021" description="In FANCA; dbSNP:rs149851163." evidence="13">
    <original>R</original>
    <variation>H</variation>
    <location>
        <position position="1400"/>
    </location>
</feature>
<feature type="sequence variant" id="VAR_009658" description="In FANCA; dbSNP:rs17227403." evidence="21">
    <original>H</original>
    <variation>D</variation>
    <location>
        <position position="1417"/>
    </location>
</feature>